<evidence type="ECO:0000255" key="1">
    <source>
        <dbReference type="HAMAP-Rule" id="MF_00113"/>
    </source>
</evidence>
<accession>Q5HFC3</accession>
<dbReference type="EC" id="2.4.99.17" evidence="1"/>
<dbReference type="EMBL" id="CP000046">
    <property type="protein sequence ID" value="AAW36801.1"/>
    <property type="molecule type" value="Genomic_DNA"/>
</dbReference>
<dbReference type="RefSeq" id="WP_001019172.1">
    <property type="nucleotide sequence ID" value="NZ_JBGOFO010000003.1"/>
</dbReference>
<dbReference type="SMR" id="Q5HFC3"/>
<dbReference type="KEGG" id="sac:SACOL1695"/>
<dbReference type="HOGENOM" id="CLU_039110_1_0_9"/>
<dbReference type="UniPathway" id="UPA00392"/>
<dbReference type="Proteomes" id="UP000000530">
    <property type="component" value="Chromosome"/>
</dbReference>
<dbReference type="GO" id="GO:0005737">
    <property type="term" value="C:cytoplasm"/>
    <property type="evidence" value="ECO:0007669"/>
    <property type="project" value="UniProtKB-SubCell"/>
</dbReference>
<dbReference type="GO" id="GO:0051075">
    <property type="term" value="F:S-adenosylmethionine:tRNA ribosyltransferase-isomerase activity"/>
    <property type="evidence" value="ECO:0007669"/>
    <property type="project" value="UniProtKB-EC"/>
</dbReference>
<dbReference type="GO" id="GO:0008616">
    <property type="term" value="P:queuosine biosynthetic process"/>
    <property type="evidence" value="ECO:0007669"/>
    <property type="project" value="UniProtKB-UniRule"/>
</dbReference>
<dbReference type="GO" id="GO:0002099">
    <property type="term" value="P:tRNA wobble guanine modification"/>
    <property type="evidence" value="ECO:0007669"/>
    <property type="project" value="TreeGrafter"/>
</dbReference>
<dbReference type="FunFam" id="2.40.10.240:FF:000002">
    <property type="entry name" value="S-adenosylmethionine:tRNA ribosyltransferase-isomerase"/>
    <property type="match status" value="1"/>
</dbReference>
<dbReference type="FunFam" id="3.40.1780.10:FF:000001">
    <property type="entry name" value="S-adenosylmethionine:tRNA ribosyltransferase-isomerase"/>
    <property type="match status" value="1"/>
</dbReference>
<dbReference type="Gene3D" id="2.40.10.240">
    <property type="entry name" value="QueA-like"/>
    <property type="match status" value="1"/>
</dbReference>
<dbReference type="Gene3D" id="3.40.1780.10">
    <property type="entry name" value="QueA-like"/>
    <property type="match status" value="1"/>
</dbReference>
<dbReference type="HAMAP" id="MF_00113">
    <property type="entry name" value="QueA"/>
    <property type="match status" value="1"/>
</dbReference>
<dbReference type="InterPro" id="IPR003699">
    <property type="entry name" value="QueA"/>
</dbReference>
<dbReference type="InterPro" id="IPR042118">
    <property type="entry name" value="QueA_dom1"/>
</dbReference>
<dbReference type="InterPro" id="IPR042119">
    <property type="entry name" value="QueA_dom2"/>
</dbReference>
<dbReference type="InterPro" id="IPR036100">
    <property type="entry name" value="QueA_sf"/>
</dbReference>
<dbReference type="NCBIfam" id="NF001140">
    <property type="entry name" value="PRK00147.1"/>
    <property type="match status" value="1"/>
</dbReference>
<dbReference type="NCBIfam" id="TIGR00113">
    <property type="entry name" value="queA"/>
    <property type="match status" value="1"/>
</dbReference>
<dbReference type="PANTHER" id="PTHR30307">
    <property type="entry name" value="S-ADENOSYLMETHIONINE:TRNA RIBOSYLTRANSFERASE-ISOMERASE"/>
    <property type="match status" value="1"/>
</dbReference>
<dbReference type="PANTHER" id="PTHR30307:SF0">
    <property type="entry name" value="S-ADENOSYLMETHIONINE:TRNA RIBOSYLTRANSFERASE-ISOMERASE"/>
    <property type="match status" value="1"/>
</dbReference>
<dbReference type="Pfam" id="PF02547">
    <property type="entry name" value="Queuosine_synth"/>
    <property type="match status" value="1"/>
</dbReference>
<dbReference type="SUPFAM" id="SSF111337">
    <property type="entry name" value="QueA-like"/>
    <property type="match status" value="1"/>
</dbReference>
<feature type="chain" id="PRO_0000165438" description="S-adenosylmethionine:tRNA ribosyltransferase-isomerase">
    <location>
        <begin position="1"/>
        <end position="341"/>
    </location>
</feature>
<reference key="1">
    <citation type="journal article" date="2005" name="J. Bacteriol.">
        <title>Insights on evolution of virulence and resistance from the complete genome analysis of an early methicillin-resistant Staphylococcus aureus strain and a biofilm-producing methicillin-resistant Staphylococcus epidermidis strain.</title>
        <authorList>
            <person name="Gill S.R."/>
            <person name="Fouts D.E."/>
            <person name="Archer G.L."/>
            <person name="Mongodin E.F."/>
            <person name="DeBoy R.T."/>
            <person name="Ravel J."/>
            <person name="Paulsen I.T."/>
            <person name="Kolonay J.F."/>
            <person name="Brinkac L.M."/>
            <person name="Beanan M.J."/>
            <person name="Dodson R.J."/>
            <person name="Daugherty S.C."/>
            <person name="Madupu R."/>
            <person name="Angiuoli S.V."/>
            <person name="Durkin A.S."/>
            <person name="Haft D.H."/>
            <person name="Vamathevan J.J."/>
            <person name="Khouri H."/>
            <person name="Utterback T.R."/>
            <person name="Lee C."/>
            <person name="Dimitrov G."/>
            <person name="Jiang L."/>
            <person name="Qin H."/>
            <person name="Weidman J."/>
            <person name="Tran K."/>
            <person name="Kang K.H."/>
            <person name="Hance I.R."/>
            <person name="Nelson K.E."/>
            <person name="Fraser C.M."/>
        </authorList>
    </citation>
    <scope>NUCLEOTIDE SEQUENCE [LARGE SCALE GENOMIC DNA]</scope>
    <source>
        <strain>COL</strain>
    </source>
</reference>
<keyword id="KW-0963">Cytoplasm</keyword>
<keyword id="KW-0671">Queuosine biosynthesis</keyword>
<keyword id="KW-0949">S-adenosyl-L-methionine</keyword>
<keyword id="KW-0808">Transferase</keyword>
<organism>
    <name type="scientific">Staphylococcus aureus (strain COL)</name>
    <dbReference type="NCBI Taxonomy" id="93062"/>
    <lineage>
        <taxon>Bacteria</taxon>
        <taxon>Bacillati</taxon>
        <taxon>Bacillota</taxon>
        <taxon>Bacilli</taxon>
        <taxon>Bacillales</taxon>
        <taxon>Staphylococcaceae</taxon>
        <taxon>Staphylococcus</taxon>
    </lineage>
</organism>
<gene>
    <name evidence="1" type="primary">queA</name>
    <name type="ordered locus">SACOL1695</name>
</gene>
<proteinExistence type="inferred from homology"/>
<sequence length="341" mass="38969">MNIEEFDYDLPESLIAQTPLKDRDHSRLLVMDRETGEMKHLHFKDIIEYFRPGDTLVLNDTRVMPARLFGLKEETGAKVEMLMLTQIEGNDWEVLLKPAKRIKVGNKLNFGNGKIIAECIKEMDQGGRIMRLHYEGILQERLDELGEMPLPPYIKERLDDPDRYQTVYAKESGSAAAPTAGLHFTDELLIEIKNKGVNIAFVTLHVGLGTFRPVSVDDVNDHEMHSEYYQMTQETADLLNDTKSKGHRIISVGTTSTRTLETIRRDHDKFVETSGWTNIFIYPGFDFKAIDGQITNFHLPKSTLVMLVSAFSSRENVLNAYKTAVNLEYRFFSFGDAMLII</sequence>
<name>QUEA_STAAC</name>
<comment type="function">
    <text evidence="1">Transfers and isomerizes the ribose moiety from AdoMet to the 7-aminomethyl group of 7-deazaguanine (preQ1-tRNA) to give epoxyqueuosine (oQ-tRNA).</text>
</comment>
<comment type="catalytic activity">
    <reaction evidence="1">
        <text>7-aminomethyl-7-carbaguanosine(34) in tRNA + S-adenosyl-L-methionine = epoxyqueuosine(34) in tRNA + adenine + L-methionine + 2 H(+)</text>
        <dbReference type="Rhea" id="RHEA:32155"/>
        <dbReference type="Rhea" id="RHEA-COMP:10342"/>
        <dbReference type="Rhea" id="RHEA-COMP:18582"/>
        <dbReference type="ChEBI" id="CHEBI:15378"/>
        <dbReference type="ChEBI" id="CHEBI:16708"/>
        <dbReference type="ChEBI" id="CHEBI:57844"/>
        <dbReference type="ChEBI" id="CHEBI:59789"/>
        <dbReference type="ChEBI" id="CHEBI:82833"/>
        <dbReference type="ChEBI" id="CHEBI:194443"/>
        <dbReference type="EC" id="2.4.99.17"/>
    </reaction>
</comment>
<comment type="pathway">
    <text evidence="1">tRNA modification; tRNA-queuosine biosynthesis.</text>
</comment>
<comment type="subunit">
    <text evidence="1">Monomer.</text>
</comment>
<comment type="subcellular location">
    <subcellularLocation>
        <location evidence="1">Cytoplasm</location>
    </subcellularLocation>
</comment>
<comment type="similarity">
    <text evidence="1">Belongs to the QueA family.</text>
</comment>
<protein>
    <recommendedName>
        <fullName evidence="1">S-adenosylmethionine:tRNA ribosyltransferase-isomerase</fullName>
        <ecNumber evidence="1">2.4.99.17</ecNumber>
    </recommendedName>
    <alternativeName>
        <fullName evidence="1">Queuosine biosynthesis protein QueA</fullName>
    </alternativeName>
</protein>